<evidence type="ECO:0000255" key="1">
    <source>
        <dbReference type="HAMAP-Rule" id="MF_00693"/>
    </source>
</evidence>
<name>Y1220_METCA</name>
<accession>Q609L3</accession>
<dbReference type="EMBL" id="AE017282">
    <property type="protein sequence ID" value="AAU92534.1"/>
    <property type="molecule type" value="Genomic_DNA"/>
</dbReference>
<dbReference type="RefSeq" id="WP_010960504.1">
    <property type="nucleotide sequence ID" value="NC_002977.6"/>
</dbReference>
<dbReference type="SMR" id="Q609L3"/>
<dbReference type="STRING" id="243233.MCA1220"/>
<dbReference type="GeneID" id="88223506"/>
<dbReference type="KEGG" id="mca:MCA1220"/>
<dbReference type="eggNOG" id="COG0217">
    <property type="taxonomic scope" value="Bacteria"/>
</dbReference>
<dbReference type="HOGENOM" id="CLU_062974_2_2_6"/>
<dbReference type="Proteomes" id="UP000006821">
    <property type="component" value="Chromosome"/>
</dbReference>
<dbReference type="GO" id="GO:0005829">
    <property type="term" value="C:cytosol"/>
    <property type="evidence" value="ECO:0007669"/>
    <property type="project" value="TreeGrafter"/>
</dbReference>
<dbReference type="GO" id="GO:0003677">
    <property type="term" value="F:DNA binding"/>
    <property type="evidence" value="ECO:0007669"/>
    <property type="project" value="UniProtKB-UniRule"/>
</dbReference>
<dbReference type="GO" id="GO:0006355">
    <property type="term" value="P:regulation of DNA-templated transcription"/>
    <property type="evidence" value="ECO:0007669"/>
    <property type="project" value="UniProtKB-UniRule"/>
</dbReference>
<dbReference type="FunFam" id="1.10.10.200:FF:000001">
    <property type="entry name" value="Probable transcriptional regulatory protein YebC"/>
    <property type="match status" value="1"/>
</dbReference>
<dbReference type="FunFam" id="3.30.70.980:FF:000002">
    <property type="entry name" value="Probable transcriptional regulatory protein YebC"/>
    <property type="match status" value="1"/>
</dbReference>
<dbReference type="Gene3D" id="1.10.10.200">
    <property type="match status" value="1"/>
</dbReference>
<dbReference type="Gene3D" id="3.30.70.980">
    <property type="match status" value="2"/>
</dbReference>
<dbReference type="HAMAP" id="MF_00693">
    <property type="entry name" value="Transcrip_reg_TACO1"/>
    <property type="match status" value="1"/>
</dbReference>
<dbReference type="InterPro" id="IPR017856">
    <property type="entry name" value="Integrase-like_N"/>
</dbReference>
<dbReference type="InterPro" id="IPR048300">
    <property type="entry name" value="TACO1_YebC-like_2nd/3rd_dom"/>
</dbReference>
<dbReference type="InterPro" id="IPR049083">
    <property type="entry name" value="TACO1_YebC_N"/>
</dbReference>
<dbReference type="InterPro" id="IPR002876">
    <property type="entry name" value="Transcrip_reg_TACO1-like"/>
</dbReference>
<dbReference type="InterPro" id="IPR026564">
    <property type="entry name" value="Transcrip_reg_TACO1-like_dom3"/>
</dbReference>
<dbReference type="InterPro" id="IPR029072">
    <property type="entry name" value="YebC-like"/>
</dbReference>
<dbReference type="NCBIfam" id="NF001030">
    <property type="entry name" value="PRK00110.1"/>
    <property type="match status" value="1"/>
</dbReference>
<dbReference type="NCBIfam" id="NF009044">
    <property type="entry name" value="PRK12378.1"/>
    <property type="match status" value="1"/>
</dbReference>
<dbReference type="NCBIfam" id="TIGR01033">
    <property type="entry name" value="YebC/PmpR family DNA-binding transcriptional regulator"/>
    <property type="match status" value="1"/>
</dbReference>
<dbReference type="PANTHER" id="PTHR12532:SF6">
    <property type="entry name" value="TRANSCRIPTIONAL REGULATORY PROTEIN YEBC-RELATED"/>
    <property type="match status" value="1"/>
</dbReference>
<dbReference type="PANTHER" id="PTHR12532">
    <property type="entry name" value="TRANSLATIONAL ACTIVATOR OF CYTOCHROME C OXIDASE 1"/>
    <property type="match status" value="1"/>
</dbReference>
<dbReference type="Pfam" id="PF20772">
    <property type="entry name" value="TACO1_YebC_N"/>
    <property type="match status" value="1"/>
</dbReference>
<dbReference type="Pfam" id="PF01709">
    <property type="entry name" value="Transcrip_reg"/>
    <property type="match status" value="1"/>
</dbReference>
<dbReference type="SUPFAM" id="SSF75625">
    <property type="entry name" value="YebC-like"/>
    <property type="match status" value="1"/>
</dbReference>
<gene>
    <name type="ordered locus">MCA1220</name>
</gene>
<feature type="chain" id="PRO_0000175842" description="Probable transcriptional regulatory protein MCA1220">
    <location>
        <begin position="1"/>
        <end position="248"/>
    </location>
</feature>
<protein>
    <recommendedName>
        <fullName evidence="1">Probable transcriptional regulatory protein MCA1220</fullName>
    </recommendedName>
</protein>
<sequence length="248" mass="26540">MAGHSKWANIQHRKGAQDAKRGKLFTKLIREITVASRTGGPDPGNNPRLRTAIDKALVANMSKDTIERAIKKGSGAADGDNYEEVRYEGYGPGGIAVLVDCLTDNRNRTVAEVRHAFSKAGGNLGTDGSVAYLFSKTGVVSFSADLGEDRVMEPALDAGADDVVVNEDGSVDVLTAPDQFEAVRDALEAAGLTPESAEVTMRASTSVKLDKEDAEKMIRLLERLEDLDDVQNVYSNADISEDILAELG</sequence>
<keyword id="KW-0963">Cytoplasm</keyword>
<keyword id="KW-0238">DNA-binding</keyword>
<keyword id="KW-1185">Reference proteome</keyword>
<keyword id="KW-0804">Transcription</keyword>
<keyword id="KW-0805">Transcription regulation</keyword>
<reference key="1">
    <citation type="journal article" date="2004" name="PLoS Biol.">
        <title>Genomic insights into methanotrophy: the complete genome sequence of Methylococcus capsulatus (Bath).</title>
        <authorList>
            <person name="Ward N.L."/>
            <person name="Larsen O."/>
            <person name="Sakwa J."/>
            <person name="Bruseth L."/>
            <person name="Khouri H.M."/>
            <person name="Durkin A.S."/>
            <person name="Dimitrov G."/>
            <person name="Jiang L."/>
            <person name="Scanlan D."/>
            <person name="Kang K.H."/>
            <person name="Lewis M.R."/>
            <person name="Nelson K.E."/>
            <person name="Methe B.A."/>
            <person name="Wu M."/>
            <person name="Heidelberg J.F."/>
            <person name="Paulsen I.T."/>
            <person name="Fouts D.E."/>
            <person name="Ravel J."/>
            <person name="Tettelin H."/>
            <person name="Ren Q."/>
            <person name="Read T.D."/>
            <person name="DeBoy R.T."/>
            <person name="Seshadri R."/>
            <person name="Salzberg S.L."/>
            <person name="Jensen H.B."/>
            <person name="Birkeland N.K."/>
            <person name="Nelson W.C."/>
            <person name="Dodson R.J."/>
            <person name="Grindhaug S.H."/>
            <person name="Holt I.E."/>
            <person name="Eidhammer I."/>
            <person name="Jonasen I."/>
            <person name="Vanaken S."/>
            <person name="Utterback T.R."/>
            <person name="Feldblyum T.V."/>
            <person name="Fraser C.M."/>
            <person name="Lillehaug J.R."/>
            <person name="Eisen J.A."/>
        </authorList>
    </citation>
    <scope>NUCLEOTIDE SEQUENCE [LARGE SCALE GENOMIC DNA]</scope>
    <source>
        <strain>ATCC 33009 / NCIMB 11132 / Bath</strain>
    </source>
</reference>
<comment type="subcellular location">
    <subcellularLocation>
        <location evidence="1">Cytoplasm</location>
    </subcellularLocation>
</comment>
<comment type="similarity">
    <text evidence="1">Belongs to the TACO1 family.</text>
</comment>
<proteinExistence type="inferred from homology"/>
<organism>
    <name type="scientific">Methylococcus capsulatus (strain ATCC 33009 / NCIMB 11132 / Bath)</name>
    <dbReference type="NCBI Taxonomy" id="243233"/>
    <lineage>
        <taxon>Bacteria</taxon>
        <taxon>Pseudomonadati</taxon>
        <taxon>Pseudomonadota</taxon>
        <taxon>Gammaproteobacteria</taxon>
        <taxon>Methylococcales</taxon>
        <taxon>Methylococcaceae</taxon>
        <taxon>Methylococcus</taxon>
    </lineage>
</organism>